<proteinExistence type="inferred from homology"/>
<keyword id="KW-0021">Allosteric enzyme</keyword>
<keyword id="KW-0963">Cytoplasm</keyword>
<keyword id="KW-0378">Hydrolase</keyword>
<keyword id="KW-0479">Metal-binding</keyword>
<keyword id="KW-0645">Protease</keyword>
<keyword id="KW-0915">Sodium</keyword>
<keyword id="KW-0888">Threonine protease</keyword>
<sequence>MFEATTILGYRGEFDNKKFALIGGDGQVTLGNCVVKANAIKIRSLYHNQVLSGFAGSTADAFSLFDMFERILESKKGDLFKSVVDFSKEWRKDKYLRRLEAMMIVLNFDHVFILSGTGDVLEAEDNKIAAIGSGGNFALSAARALDHFAHLEPRKLVEESLKIAGDLCIYTNTNIKILEL</sequence>
<comment type="function">
    <text evidence="1">Protease subunit of a proteasome-like degradation complex believed to be a general protein degrading machinery.</text>
</comment>
<comment type="catalytic activity">
    <reaction evidence="1">
        <text>ATP-dependent cleavage of peptide bonds with broad specificity.</text>
        <dbReference type="EC" id="3.4.25.2"/>
    </reaction>
</comment>
<comment type="activity regulation">
    <text evidence="1">Allosterically activated by HslU binding.</text>
</comment>
<comment type="subunit">
    <text evidence="1">A double ring-shaped homohexamer of HslV is capped on each side by a ring-shaped HslU homohexamer. The assembly of the HslU/HslV complex is dependent on binding of ATP.</text>
</comment>
<comment type="subcellular location">
    <subcellularLocation>
        <location evidence="1">Cytoplasm</location>
    </subcellularLocation>
</comment>
<comment type="similarity">
    <text evidence="1">Belongs to the peptidase T1B family. HslV subfamily.</text>
</comment>
<dbReference type="EC" id="3.4.25.2" evidence="1"/>
<dbReference type="EMBL" id="AE001439">
    <property type="protein sequence ID" value="AAD06045.1"/>
    <property type="molecule type" value="Genomic_DNA"/>
</dbReference>
<dbReference type="PIR" id="E71929">
    <property type="entry name" value="E71929"/>
</dbReference>
<dbReference type="RefSeq" id="WP_000461005.1">
    <property type="nucleotide sequence ID" value="NC_000921.1"/>
</dbReference>
<dbReference type="SMR" id="Q9ZLW2"/>
<dbReference type="KEGG" id="hpj:jhp_0464"/>
<dbReference type="PATRIC" id="fig|85963.30.peg.538"/>
<dbReference type="eggNOG" id="COG5405">
    <property type="taxonomic scope" value="Bacteria"/>
</dbReference>
<dbReference type="Proteomes" id="UP000000804">
    <property type="component" value="Chromosome"/>
</dbReference>
<dbReference type="GO" id="GO:0009376">
    <property type="term" value="C:HslUV protease complex"/>
    <property type="evidence" value="ECO:0007669"/>
    <property type="project" value="UniProtKB-UniRule"/>
</dbReference>
<dbReference type="GO" id="GO:0005839">
    <property type="term" value="C:proteasome core complex"/>
    <property type="evidence" value="ECO:0007669"/>
    <property type="project" value="InterPro"/>
</dbReference>
<dbReference type="GO" id="GO:0046872">
    <property type="term" value="F:metal ion binding"/>
    <property type="evidence" value="ECO:0007669"/>
    <property type="project" value="UniProtKB-KW"/>
</dbReference>
<dbReference type="GO" id="GO:0004298">
    <property type="term" value="F:threonine-type endopeptidase activity"/>
    <property type="evidence" value="ECO:0007669"/>
    <property type="project" value="UniProtKB-KW"/>
</dbReference>
<dbReference type="GO" id="GO:0051603">
    <property type="term" value="P:proteolysis involved in protein catabolic process"/>
    <property type="evidence" value="ECO:0007669"/>
    <property type="project" value="InterPro"/>
</dbReference>
<dbReference type="Gene3D" id="3.60.20.10">
    <property type="entry name" value="Glutamine Phosphoribosylpyrophosphate, subunit 1, domain 1"/>
    <property type="match status" value="1"/>
</dbReference>
<dbReference type="HAMAP" id="MF_00248">
    <property type="entry name" value="HslV"/>
    <property type="match status" value="1"/>
</dbReference>
<dbReference type="InterPro" id="IPR022281">
    <property type="entry name" value="ATP-dep_Prtase_HsIV_su"/>
</dbReference>
<dbReference type="InterPro" id="IPR029055">
    <property type="entry name" value="Ntn_hydrolases_N"/>
</dbReference>
<dbReference type="InterPro" id="IPR001353">
    <property type="entry name" value="Proteasome_sua/b"/>
</dbReference>
<dbReference type="InterPro" id="IPR023333">
    <property type="entry name" value="Proteasome_suB-type"/>
</dbReference>
<dbReference type="NCBIfam" id="TIGR03692">
    <property type="entry name" value="ATP_dep_HslV"/>
    <property type="match status" value="1"/>
</dbReference>
<dbReference type="NCBIfam" id="NF003964">
    <property type="entry name" value="PRK05456.1"/>
    <property type="match status" value="1"/>
</dbReference>
<dbReference type="PANTHER" id="PTHR32194:SF0">
    <property type="entry name" value="ATP-DEPENDENT PROTEASE SUBUNIT HSLV"/>
    <property type="match status" value="1"/>
</dbReference>
<dbReference type="PANTHER" id="PTHR32194">
    <property type="entry name" value="METALLOPROTEASE TLDD"/>
    <property type="match status" value="1"/>
</dbReference>
<dbReference type="Pfam" id="PF00227">
    <property type="entry name" value="Proteasome"/>
    <property type="match status" value="1"/>
</dbReference>
<dbReference type="SUPFAM" id="SSF56235">
    <property type="entry name" value="N-terminal nucleophile aminohydrolases (Ntn hydrolases)"/>
    <property type="match status" value="1"/>
</dbReference>
<dbReference type="PROSITE" id="PS51476">
    <property type="entry name" value="PROTEASOME_BETA_2"/>
    <property type="match status" value="1"/>
</dbReference>
<organism>
    <name type="scientific">Helicobacter pylori (strain J99 / ATCC 700824)</name>
    <name type="common">Campylobacter pylori J99</name>
    <dbReference type="NCBI Taxonomy" id="85963"/>
    <lineage>
        <taxon>Bacteria</taxon>
        <taxon>Pseudomonadati</taxon>
        <taxon>Campylobacterota</taxon>
        <taxon>Epsilonproteobacteria</taxon>
        <taxon>Campylobacterales</taxon>
        <taxon>Helicobacteraceae</taxon>
        <taxon>Helicobacter</taxon>
    </lineage>
</organism>
<protein>
    <recommendedName>
        <fullName evidence="1">ATP-dependent protease subunit HslV</fullName>
        <ecNumber evidence="1">3.4.25.2</ecNumber>
    </recommendedName>
</protein>
<accession>Q9ZLW2</accession>
<gene>
    <name evidence="1" type="primary">hslV</name>
    <name type="ordered locus">jhp_0464</name>
</gene>
<reference key="1">
    <citation type="journal article" date="1999" name="Nature">
        <title>Genomic sequence comparison of two unrelated isolates of the human gastric pathogen Helicobacter pylori.</title>
        <authorList>
            <person name="Alm R.A."/>
            <person name="Ling L.-S.L."/>
            <person name="Moir D.T."/>
            <person name="King B.L."/>
            <person name="Brown E.D."/>
            <person name="Doig P.C."/>
            <person name="Smith D.R."/>
            <person name="Noonan B."/>
            <person name="Guild B.C."/>
            <person name="deJonge B.L."/>
            <person name="Carmel G."/>
            <person name="Tummino P.J."/>
            <person name="Caruso A."/>
            <person name="Uria-Nickelsen M."/>
            <person name="Mills D.M."/>
            <person name="Ives C."/>
            <person name="Gibson R."/>
            <person name="Merberg D."/>
            <person name="Mills S.D."/>
            <person name="Jiang Q."/>
            <person name="Taylor D.E."/>
            <person name="Vovis G.F."/>
            <person name="Trust T.J."/>
        </authorList>
    </citation>
    <scope>NUCLEOTIDE SEQUENCE [LARGE SCALE GENOMIC DNA]</scope>
    <source>
        <strain>J99 / ATCC 700824</strain>
    </source>
</reference>
<evidence type="ECO:0000255" key="1">
    <source>
        <dbReference type="HAMAP-Rule" id="MF_00248"/>
    </source>
</evidence>
<name>HSLV_HELPJ</name>
<feature type="chain" id="PRO_0000148114" description="ATP-dependent protease subunit HslV">
    <location>
        <begin position="1"/>
        <end position="180"/>
    </location>
</feature>
<feature type="active site" evidence="1">
    <location>
        <position position="5"/>
    </location>
</feature>
<feature type="binding site" evidence="1">
    <location>
        <position position="165"/>
    </location>
    <ligand>
        <name>Na(+)</name>
        <dbReference type="ChEBI" id="CHEBI:29101"/>
    </ligand>
</feature>
<feature type="binding site" evidence="1">
    <location>
        <position position="168"/>
    </location>
    <ligand>
        <name>Na(+)</name>
        <dbReference type="ChEBI" id="CHEBI:29101"/>
    </ligand>
</feature>
<feature type="binding site" evidence="1">
    <location>
        <position position="171"/>
    </location>
    <ligand>
        <name>Na(+)</name>
        <dbReference type="ChEBI" id="CHEBI:29101"/>
    </ligand>
</feature>